<sequence length="117" mass="13641">MPLYEHVMIARQDLSNSQAEGLIEHFGAVLSDNGGKLVDQEYWGVKTMAYKINKNRKGHYAFLRSDAPSSAVQEMERLMRLHDDVMRVLTIKVEEHAEGPSVQMQKRDERDNRRERR</sequence>
<accession>Q1GHT8</accession>
<protein>
    <recommendedName>
        <fullName evidence="1">Small ribosomal subunit protein bS6</fullName>
    </recommendedName>
    <alternativeName>
        <fullName evidence="3">30S ribosomal protein S6</fullName>
    </alternativeName>
</protein>
<feature type="chain" id="PRO_1000005355" description="Small ribosomal subunit protein bS6">
    <location>
        <begin position="1"/>
        <end position="117"/>
    </location>
</feature>
<feature type="region of interest" description="Disordered" evidence="2">
    <location>
        <begin position="96"/>
        <end position="117"/>
    </location>
</feature>
<feature type="compositionally biased region" description="Basic and acidic residues" evidence="2">
    <location>
        <begin position="105"/>
        <end position="117"/>
    </location>
</feature>
<keyword id="KW-1185">Reference proteome</keyword>
<keyword id="KW-0687">Ribonucleoprotein</keyword>
<keyword id="KW-0689">Ribosomal protein</keyword>
<keyword id="KW-0694">RNA-binding</keyword>
<keyword id="KW-0699">rRNA-binding</keyword>
<organism>
    <name type="scientific">Ruegeria sp. (strain TM1040)</name>
    <name type="common">Silicibacter sp.</name>
    <dbReference type="NCBI Taxonomy" id="292414"/>
    <lineage>
        <taxon>Bacteria</taxon>
        <taxon>Pseudomonadati</taxon>
        <taxon>Pseudomonadota</taxon>
        <taxon>Alphaproteobacteria</taxon>
        <taxon>Rhodobacterales</taxon>
        <taxon>Roseobacteraceae</taxon>
        <taxon>Ruegeria</taxon>
    </lineage>
</organism>
<evidence type="ECO:0000255" key="1">
    <source>
        <dbReference type="HAMAP-Rule" id="MF_00360"/>
    </source>
</evidence>
<evidence type="ECO:0000256" key="2">
    <source>
        <dbReference type="SAM" id="MobiDB-lite"/>
    </source>
</evidence>
<evidence type="ECO:0000305" key="3"/>
<name>RS6_RUEST</name>
<gene>
    <name evidence="1" type="primary">rpsF</name>
    <name type="ordered locus">TM1040_1045</name>
</gene>
<reference key="1">
    <citation type="submission" date="2006-05" db="EMBL/GenBank/DDBJ databases">
        <title>Complete sequence of chromosome of Silicibacter sp. TM1040.</title>
        <authorList>
            <consortium name="US DOE Joint Genome Institute"/>
            <person name="Copeland A."/>
            <person name="Lucas S."/>
            <person name="Lapidus A."/>
            <person name="Barry K."/>
            <person name="Detter J.C."/>
            <person name="Glavina del Rio T."/>
            <person name="Hammon N."/>
            <person name="Israni S."/>
            <person name="Dalin E."/>
            <person name="Tice H."/>
            <person name="Pitluck S."/>
            <person name="Brettin T."/>
            <person name="Bruce D."/>
            <person name="Han C."/>
            <person name="Tapia R."/>
            <person name="Goodwin L."/>
            <person name="Thompson L.S."/>
            <person name="Gilna P."/>
            <person name="Schmutz J."/>
            <person name="Larimer F."/>
            <person name="Land M."/>
            <person name="Hauser L."/>
            <person name="Kyrpides N."/>
            <person name="Kim E."/>
            <person name="Belas R."/>
            <person name="Moran M.A."/>
            <person name="Buchan A."/>
            <person name="Gonzalez J.M."/>
            <person name="Schell M.A."/>
            <person name="Sun F."/>
            <person name="Richardson P."/>
        </authorList>
    </citation>
    <scope>NUCLEOTIDE SEQUENCE [LARGE SCALE GENOMIC DNA]</scope>
    <source>
        <strain>TM1040</strain>
    </source>
</reference>
<proteinExistence type="inferred from homology"/>
<comment type="function">
    <text evidence="1">Binds together with bS18 to 16S ribosomal RNA.</text>
</comment>
<comment type="similarity">
    <text evidence="1">Belongs to the bacterial ribosomal protein bS6 family.</text>
</comment>
<dbReference type="EMBL" id="CP000377">
    <property type="protein sequence ID" value="ABF63778.1"/>
    <property type="molecule type" value="Genomic_DNA"/>
</dbReference>
<dbReference type="RefSeq" id="WP_005608637.1">
    <property type="nucleotide sequence ID" value="NC_008044.1"/>
</dbReference>
<dbReference type="SMR" id="Q1GHT8"/>
<dbReference type="STRING" id="292414.TM1040_1045"/>
<dbReference type="GeneID" id="28249799"/>
<dbReference type="KEGG" id="sit:TM1040_1045"/>
<dbReference type="eggNOG" id="COG0360">
    <property type="taxonomic scope" value="Bacteria"/>
</dbReference>
<dbReference type="HOGENOM" id="CLU_113441_2_0_5"/>
<dbReference type="OrthoDB" id="9812702at2"/>
<dbReference type="Proteomes" id="UP000000636">
    <property type="component" value="Chromosome"/>
</dbReference>
<dbReference type="GO" id="GO:0022627">
    <property type="term" value="C:cytosolic small ribosomal subunit"/>
    <property type="evidence" value="ECO:0007669"/>
    <property type="project" value="TreeGrafter"/>
</dbReference>
<dbReference type="GO" id="GO:0070181">
    <property type="term" value="F:small ribosomal subunit rRNA binding"/>
    <property type="evidence" value="ECO:0007669"/>
    <property type="project" value="TreeGrafter"/>
</dbReference>
<dbReference type="GO" id="GO:0003735">
    <property type="term" value="F:structural constituent of ribosome"/>
    <property type="evidence" value="ECO:0007669"/>
    <property type="project" value="InterPro"/>
</dbReference>
<dbReference type="GO" id="GO:0006412">
    <property type="term" value="P:translation"/>
    <property type="evidence" value="ECO:0007669"/>
    <property type="project" value="UniProtKB-UniRule"/>
</dbReference>
<dbReference type="CDD" id="cd00473">
    <property type="entry name" value="bS6"/>
    <property type="match status" value="1"/>
</dbReference>
<dbReference type="Gene3D" id="3.30.70.60">
    <property type="match status" value="1"/>
</dbReference>
<dbReference type="HAMAP" id="MF_00360">
    <property type="entry name" value="Ribosomal_bS6"/>
    <property type="match status" value="1"/>
</dbReference>
<dbReference type="InterPro" id="IPR000529">
    <property type="entry name" value="Ribosomal_bS6"/>
</dbReference>
<dbReference type="InterPro" id="IPR035980">
    <property type="entry name" value="Ribosomal_bS6_sf"/>
</dbReference>
<dbReference type="InterPro" id="IPR020814">
    <property type="entry name" value="Ribosomal_S6_plastid/chlpt"/>
</dbReference>
<dbReference type="InterPro" id="IPR014717">
    <property type="entry name" value="Transl_elong_EF1B/ribsomal_bS6"/>
</dbReference>
<dbReference type="NCBIfam" id="TIGR00166">
    <property type="entry name" value="S6"/>
    <property type="match status" value="1"/>
</dbReference>
<dbReference type="PANTHER" id="PTHR21011">
    <property type="entry name" value="MITOCHONDRIAL 28S RIBOSOMAL PROTEIN S6"/>
    <property type="match status" value="1"/>
</dbReference>
<dbReference type="PANTHER" id="PTHR21011:SF1">
    <property type="entry name" value="SMALL RIBOSOMAL SUBUNIT PROTEIN BS6M"/>
    <property type="match status" value="1"/>
</dbReference>
<dbReference type="Pfam" id="PF01250">
    <property type="entry name" value="Ribosomal_S6"/>
    <property type="match status" value="1"/>
</dbReference>
<dbReference type="SUPFAM" id="SSF54995">
    <property type="entry name" value="Ribosomal protein S6"/>
    <property type="match status" value="1"/>
</dbReference>